<evidence type="ECO:0000255" key="1">
    <source>
        <dbReference type="HAMAP-Rule" id="MF_01456"/>
    </source>
</evidence>
<name>NUOK_CAMFF</name>
<keyword id="KW-0997">Cell inner membrane</keyword>
<keyword id="KW-1003">Cell membrane</keyword>
<keyword id="KW-0472">Membrane</keyword>
<keyword id="KW-0520">NAD</keyword>
<keyword id="KW-0874">Quinone</keyword>
<keyword id="KW-1278">Translocase</keyword>
<keyword id="KW-0812">Transmembrane</keyword>
<keyword id="KW-1133">Transmembrane helix</keyword>
<keyword id="KW-0813">Transport</keyword>
<keyword id="KW-0830">Ubiquinone</keyword>
<dbReference type="EC" id="7.1.1.-" evidence="1"/>
<dbReference type="EMBL" id="CP000487">
    <property type="protein sequence ID" value="ABK81855.1"/>
    <property type="molecule type" value="Genomic_DNA"/>
</dbReference>
<dbReference type="RefSeq" id="WP_002848164.1">
    <property type="nucleotide sequence ID" value="NC_008599.1"/>
</dbReference>
<dbReference type="SMR" id="A0RMD8"/>
<dbReference type="GeneID" id="61064011"/>
<dbReference type="KEGG" id="cff:CFF8240_0166"/>
<dbReference type="eggNOG" id="COG0713">
    <property type="taxonomic scope" value="Bacteria"/>
</dbReference>
<dbReference type="HOGENOM" id="CLU_144724_0_0_7"/>
<dbReference type="Proteomes" id="UP000000760">
    <property type="component" value="Chromosome"/>
</dbReference>
<dbReference type="GO" id="GO:0030964">
    <property type="term" value="C:NADH dehydrogenase complex"/>
    <property type="evidence" value="ECO:0007669"/>
    <property type="project" value="TreeGrafter"/>
</dbReference>
<dbReference type="GO" id="GO:0005886">
    <property type="term" value="C:plasma membrane"/>
    <property type="evidence" value="ECO:0007669"/>
    <property type="project" value="UniProtKB-SubCell"/>
</dbReference>
<dbReference type="GO" id="GO:0050136">
    <property type="term" value="F:NADH:ubiquinone reductase (non-electrogenic) activity"/>
    <property type="evidence" value="ECO:0007669"/>
    <property type="project" value="UniProtKB-UniRule"/>
</dbReference>
<dbReference type="GO" id="GO:0048038">
    <property type="term" value="F:quinone binding"/>
    <property type="evidence" value="ECO:0007669"/>
    <property type="project" value="UniProtKB-KW"/>
</dbReference>
<dbReference type="GO" id="GO:0042773">
    <property type="term" value="P:ATP synthesis coupled electron transport"/>
    <property type="evidence" value="ECO:0007669"/>
    <property type="project" value="InterPro"/>
</dbReference>
<dbReference type="FunFam" id="1.10.287.3510:FF:000001">
    <property type="entry name" value="NADH-quinone oxidoreductase subunit K"/>
    <property type="match status" value="1"/>
</dbReference>
<dbReference type="Gene3D" id="1.10.287.3510">
    <property type="match status" value="1"/>
</dbReference>
<dbReference type="HAMAP" id="MF_01456">
    <property type="entry name" value="NDH1_NuoK"/>
    <property type="match status" value="1"/>
</dbReference>
<dbReference type="InterPro" id="IPR001133">
    <property type="entry name" value="NADH_UbQ_OxRdtase_chain4L/K"/>
</dbReference>
<dbReference type="InterPro" id="IPR039428">
    <property type="entry name" value="NUOK/Mnh_C1-like"/>
</dbReference>
<dbReference type="NCBIfam" id="NF004320">
    <property type="entry name" value="PRK05715.1-2"/>
    <property type="match status" value="1"/>
</dbReference>
<dbReference type="PANTHER" id="PTHR11434:SF16">
    <property type="entry name" value="NADH-UBIQUINONE OXIDOREDUCTASE CHAIN 4L"/>
    <property type="match status" value="1"/>
</dbReference>
<dbReference type="PANTHER" id="PTHR11434">
    <property type="entry name" value="NADH-UBIQUINONE OXIDOREDUCTASE SUBUNIT ND4L"/>
    <property type="match status" value="1"/>
</dbReference>
<dbReference type="Pfam" id="PF00420">
    <property type="entry name" value="Oxidored_q2"/>
    <property type="match status" value="1"/>
</dbReference>
<organism>
    <name type="scientific">Campylobacter fetus subsp. fetus (strain 82-40)</name>
    <dbReference type="NCBI Taxonomy" id="360106"/>
    <lineage>
        <taxon>Bacteria</taxon>
        <taxon>Pseudomonadati</taxon>
        <taxon>Campylobacterota</taxon>
        <taxon>Epsilonproteobacteria</taxon>
        <taxon>Campylobacterales</taxon>
        <taxon>Campylobacteraceae</taxon>
        <taxon>Campylobacter</taxon>
    </lineage>
</organism>
<protein>
    <recommendedName>
        <fullName evidence="1">NADH-quinone oxidoreductase subunit K</fullName>
        <ecNumber evidence="1">7.1.1.-</ecNumber>
    </recommendedName>
    <alternativeName>
        <fullName evidence="1">NADH dehydrogenase I subunit K</fullName>
    </alternativeName>
    <alternativeName>
        <fullName evidence="1">NDH-1 subunit K</fullName>
    </alternativeName>
</protein>
<gene>
    <name evidence="1" type="primary">nuoK</name>
    <name type="ordered locus">CFF8240_0166</name>
</gene>
<accession>A0RMD8</accession>
<reference key="1">
    <citation type="submission" date="2006-11" db="EMBL/GenBank/DDBJ databases">
        <title>Sequence of Campylobacter fetus subsp. fetus 82-40.</title>
        <authorList>
            <person name="Fouts D.E."/>
            <person name="Nelson K.E."/>
        </authorList>
    </citation>
    <scope>NUCLEOTIDE SEQUENCE [LARGE SCALE GENOMIC DNA]</scope>
    <source>
        <strain>82-40</strain>
    </source>
</reference>
<sequence>MLDFYILVALILFFIGVLGVILRKNIFTIFMSVELMLNATALIFATFARQSLNLDGQVIVMLIIAIAAAEASFGLALIVLLYKKKQSLNIDIFDELKDRDVS</sequence>
<comment type="function">
    <text evidence="1">NDH-1 shuttles electrons from NADH, via FMN and iron-sulfur (Fe-S) centers, to quinones in the respiratory chain. The immediate electron acceptor for the enzyme in this species is believed to be ubiquinone. Couples the redox reaction to proton translocation (for every two electrons transferred, four hydrogen ions are translocated across the cytoplasmic membrane), and thus conserves the redox energy in a proton gradient.</text>
</comment>
<comment type="catalytic activity">
    <reaction evidence="1">
        <text>a quinone + NADH + 5 H(+)(in) = a quinol + NAD(+) + 4 H(+)(out)</text>
        <dbReference type="Rhea" id="RHEA:57888"/>
        <dbReference type="ChEBI" id="CHEBI:15378"/>
        <dbReference type="ChEBI" id="CHEBI:24646"/>
        <dbReference type="ChEBI" id="CHEBI:57540"/>
        <dbReference type="ChEBI" id="CHEBI:57945"/>
        <dbReference type="ChEBI" id="CHEBI:132124"/>
    </reaction>
</comment>
<comment type="subunit">
    <text evidence="1">NDH-1 is composed of 14 different subunits. Subunits NuoA, H, J, K, L, M, N constitute the membrane sector of the complex.</text>
</comment>
<comment type="subcellular location">
    <subcellularLocation>
        <location evidence="1">Cell inner membrane</location>
        <topology evidence="1">Multi-pass membrane protein</topology>
    </subcellularLocation>
</comment>
<comment type="similarity">
    <text evidence="1">Belongs to the complex I subunit 4L family.</text>
</comment>
<proteinExistence type="inferred from homology"/>
<feature type="chain" id="PRO_0000390005" description="NADH-quinone oxidoreductase subunit K">
    <location>
        <begin position="1"/>
        <end position="102"/>
    </location>
</feature>
<feature type="transmembrane region" description="Helical" evidence="1">
    <location>
        <begin position="2"/>
        <end position="22"/>
    </location>
</feature>
<feature type="transmembrane region" description="Helical" evidence="1">
    <location>
        <begin position="26"/>
        <end position="46"/>
    </location>
</feature>
<feature type="transmembrane region" description="Helical" evidence="1">
    <location>
        <begin position="58"/>
        <end position="78"/>
    </location>
</feature>